<comment type="function">
    <text evidence="2">Regulates the dendritic spine distribution of CTTN/cortactin in hippocampal neurons, and thus controls dendritic spinogenesis and dendritic spine maintenance. Associates with the striatin-interacting phosphatase and kinase (STRIPAK) core complex to regulate dendritic spine distribution of the STRIPAK complex in hippocampal neurons.</text>
</comment>
<comment type="subunit">
    <text evidence="2">Interacts with CTTN/cortactin SH3 domain. Interacts with STRN, STRN4/zinedin and MOB4/phocein; this interactions mediate the association with the STRIPAK core complex and may regulate dendritic spine distribution of the STRIPAK complex in hippocampal neurons. Activation of glutamate receptors weakens the interaction with STRN and STRN4.</text>
</comment>
<comment type="subcellular location">
    <subcellularLocation>
        <location evidence="1">Cytoplasm</location>
        <location evidence="1">Cell cortex</location>
    </subcellularLocation>
    <subcellularLocation>
        <location evidence="2">Cell projection</location>
        <location evidence="2">Dendritic spine</location>
    </subcellularLocation>
    <text evidence="2">Remains associated with dendritic spines even after glutamate stimulation.</text>
</comment>
<gene>
    <name type="primary">CTTNBP2</name>
    <name type="synonym">CORTBP2</name>
</gene>
<name>CTTB2_RABIT</name>
<sequence>MATDGASCEPDLSRAPEDAAGAAAEAAKKEFDVDTLSKSELRMLLSVMEGELEARDLVIEALRARRKEVFIQERYGRFNLNDPFLALQRDYEAGASDKEKKPVCTNPLSILEAVMAHCRKMQERMSTQLAAAESRQKKLEMEKLQLQALDQEHQKLAARLEEERGKNRHVVLMLVKECKQLSGKVIEEAQKLEEVMASLEEEKKKTNDLEEQLCTEKRRSAEMEAQMEKQLSEFDTEREQLRAKLNREEAHTTDLKEEIDKMKKMIEQLKRGSDSKPSLSLPRKTKDRRLASVSVATEGPVTRAVACQTDPVTESTDHVRKLPLTVPAKPSAGSPLVSANTKGNVCPHAAPGRPGMDRQASHGDLMGSSAPTIPAASASRMEANGPSPGSTPDLTSSTPPIPSGTTPAPAHAPGVATQSPVPAAPGHGLHSPCATTALHPGLNPRIQAARFRFQGNANDPDQNGNTTQSPPSRDVSPTSRDNLVAKQLARNTVTQALSRFTSPQVGTPPRPGVPPTGDVATHPPVSRSGLKTPGGARVDRGNPPPIPPKKPGLSQTPSPPHPQLKIPVDSSRASSAGAKVENKTVASPPSSLPPGSRVITEENPPKSSSPQLPPKPSIELTVAPAGCAVSALAASQVGAWPAETLGLKPPACSDSSLVIPNTIAFRSSINPVSASTSRPGASDSLLVTASGWSPSLTPLLMSGGPAPLAGRPTLLQQAAAQGNVTLLSMLLNEEGLDTNYSCEDGHSALYSAATNGHADCVRLLLNAEAQVNAAEKNGFTPLCAAAAQGHFECLELLLASDADVNHAADGGQTPLYLACKNGNTDCIKLLLEAGTDRSIKTRDGWTPVHAAVDTGNVDSLKLLMYYQAPARGNSSNEEEPESGAFARDGGEESSEGTSEPVVSADLINHADREGWTAAHIAASKGFKNCLEILCRHGGLEPEKRDKCNRTVHDVATDDCKHLLENLNALKIPLRISVGEIQPDNCGSDDFECENIICTLSIRKQTSWDDFSKAVSQALTNHFQAISSDGWWSLEDVAFNNTTDSSIGLSASSVRSITLGNMPWPAGRSFAPSPWDFVRKNKTEQVTALLSGPQEGCLSSVTYASMIPLKTLQNYLRLVEQYHNVIFHGPEGSLQDFIAHQLALCMKHRQMAAGFSCEIVRAEVDAGFSKEQLLDLFISSACLIPVKQSPVKKKIIIILENLENSSLSELLGDFLAPLENRSTESPCTFQKGNGASECYYFHENCFLMGTIAKACLQGSDLLVQQHFRWVQLRWDGEPMQGLLPRFLRRKVVNKFRGQVPAPCDPVHKTVAWALSVWRQLNSCLAHLGTPEALLGPKYFLSCPVVPGRAQATVKWMSKLWNAVIAPRVQAAILSRASVKRQPGLGQTAAKKHPSHGQQAVVKAALSILLNKAVLHGCPLPRAELDQHTADFRGGSFPLSIVSSYNSCSKKKGESGAWRKVSTSPRKKSGRFSSPIWNEPDLSPGGIKNKAISQLNCGRNTSLSKQKSLENELSLTLNLDQRFSLGSDDAADLVKELQSMCSSKSESDLSKIADSREELRTFHSSGSNPAFSAPVNNPRMPVAPKEVSPLSSHQATECSTSKSKTELGVSRVKSFLPVPRSKIAQCSQNTKRSSSSSNTRQPEINNNSKEENWNLHKHEQVEKPNT</sequence>
<proteinExistence type="inferred from homology"/>
<protein>
    <recommendedName>
        <fullName>Cortactin-binding protein 2</fullName>
        <shortName>CortBP2</shortName>
    </recommendedName>
</protein>
<evidence type="ECO:0000250" key="1">
    <source>
        <dbReference type="UniProtKB" id="B9EJA2"/>
    </source>
</evidence>
<evidence type="ECO:0000250" key="2">
    <source>
        <dbReference type="UniProtKB" id="Q2IBD4"/>
    </source>
</evidence>
<evidence type="ECO:0000250" key="3">
    <source>
        <dbReference type="UniProtKB" id="Q8WZ74"/>
    </source>
</evidence>
<evidence type="ECO:0000255" key="4"/>
<evidence type="ECO:0000256" key="5">
    <source>
        <dbReference type="SAM" id="MobiDB-lite"/>
    </source>
</evidence>
<keyword id="KW-0040">ANK repeat</keyword>
<keyword id="KW-0966">Cell projection</keyword>
<keyword id="KW-0175">Coiled coil</keyword>
<keyword id="KW-0963">Cytoplasm</keyword>
<keyword id="KW-0488">Methylation</keyword>
<keyword id="KW-0597">Phosphoprotein</keyword>
<keyword id="KW-1185">Reference proteome</keyword>
<keyword id="KW-0677">Repeat</keyword>
<keyword id="KW-0770">Synapse</keyword>
<feature type="chain" id="PRO_0000260413" description="Cortactin-binding protein 2">
    <location>
        <begin position="1"/>
        <end position="1664"/>
    </location>
</feature>
<feature type="repeat" description="ANK 1">
    <location>
        <begin position="710"/>
        <end position="740"/>
    </location>
</feature>
<feature type="repeat" description="ANK 2">
    <location>
        <begin position="744"/>
        <end position="773"/>
    </location>
</feature>
<feature type="repeat" description="ANK 3">
    <location>
        <begin position="777"/>
        <end position="806"/>
    </location>
</feature>
<feature type="repeat" description="ANK 4">
    <location>
        <begin position="810"/>
        <end position="839"/>
    </location>
</feature>
<feature type="repeat" description="ANK 5">
    <location>
        <begin position="843"/>
        <end position="872"/>
    </location>
</feature>
<feature type="repeat" description="ANK 6">
    <location>
        <begin position="913"/>
        <end position="943"/>
    </location>
</feature>
<feature type="region of interest" description="Disordered" evidence="5">
    <location>
        <begin position="1"/>
        <end position="23"/>
    </location>
</feature>
<feature type="region of interest" description="Disordered" evidence="5">
    <location>
        <begin position="268"/>
        <end position="440"/>
    </location>
</feature>
<feature type="region of interest" description="Disordered" evidence="5">
    <location>
        <begin position="455"/>
        <end position="479"/>
    </location>
</feature>
<feature type="region of interest" description="Disordered" evidence="5">
    <location>
        <begin position="495"/>
        <end position="618"/>
    </location>
</feature>
<feature type="region of interest" description="Disordered" evidence="5">
    <location>
        <begin position="871"/>
        <end position="900"/>
    </location>
</feature>
<feature type="region of interest" description="Disordered" evidence="5">
    <location>
        <begin position="1447"/>
        <end position="1483"/>
    </location>
</feature>
<feature type="region of interest" description="Disordered" evidence="5">
    <location>
        <begin position="1558"/>
        <end position="1664"/>
    </location>
</feature>
<feature type="coiled-coil region" evidence="4">
    <location>
        <begin position="119"/>
        <end position="276"/>
    </location>
</feature>
<feature type="compositionally biased region" description="Low complexity" evidence="5">
    <location>
        <begin position="368"/>
        <end position="379"/>
    </location>
</feature>
<feature type="compositionally biased region" description="Low complexity" evidence="5">
    <location>
        <begin position="395"/>
        <end position="407"/>
    </location>
</feature>
<feature type="compositionally biased region" description="Polar residues" evidence="5">
    <location>
        <begin position="1587"/>
        <end position="1600"/>
    </location>
</feature>
<feature type="compositionally biased region" description="Low complexity" evidence="5">
    <location>
        <begin position="1625"/>
        <end position="1639"/>
    </location>
</feature>
<feature type="compositionally biased region" description="Basic and acidic residues" evidence="5">
    <location>
        <begin position="1646"/>
        <end position="1664"/>
    </location>
</feature>
<feature type="modified residue" description="Asymmetric dimethylarginine" evidence="1">
    <location>
        <position position="499"/>
    </location>
</feature>
<feature type="modified residue" description="Phosphoserine" evidence="3">
    <location>
        <position position="1525"/>
    </location>
</feature>
<organism>
    <name type="scientific">Oryctolagus cuniculus</name>
    <name type="common">Rabbit</name>
    <dbReference type="NCBI Taxonomy" id="9986"/>
    <lineage>
        <taxon>Eukaryota</taxon>
        <taxon>Metazoa</taxon>
        <taxon>Chordata</taxon>
        <taxon>Craniata</taxon>
        <taxon>Vertebrata</taxon>
        <taxon>Euteleostomi</taxon>
        <taxon>Mammalia</taxon>
        <taxon>Eutheria</taxon>
        <taxon>Euarchontoglires</taxon>
        <taxon>Glires</taxon>
        <taxon>Lagomorpha</taxon>
        <taxon>Leporidae</taxon>
        <taxon>Oryctolagus</taxon>
    </lineage>
</organism>
<dbReference type="EMBL" id="DP000006">
    <property type="protein sequence ID" value="AAY89019.2"/>
    <property type="molecule type" value="Genomic_DNA"/>
</dbReference>
<dbReference type="RefSeq" id="NP_001164508.1">
    <property type="nucleotide sequence ID" value="NM_001171037.1"/>
</dbReference>
<dbReference type="SMR" id="Q09YM8"/>
<dbReference type="FunCoup" id="Q09YM8">
    <property type="interactions" value="159"/>
</dbReference>
<dbReference type="STRING" id="9986.ENSOCUP00000001196"/>
<dbReference type="PaxDb" id="9986-ENSOCUP00000001196"/>
<dbReference type="GeneID" id="100126566"/>
<dbReference type="KEGG" id="ocu:100126566"/>
<dbReference type="CTD" id="83992"/>
<dbReference type="eggNOG" id="ENOG502QWG2">
    <property type="taxonomic scope" value="Eukaryota"/>
</dbReference>
<dbReference type="InParanoid" id="Q09YM8"/>
<dbReference type="OrthoDB" id="6021133at2759"/>
<dbReference type="Proteomes" id="UP000001811">
    <property type="component" value="Unplaced"/>
</dbReference>
<dbReference type="GO" id="GO:0015629">
    <property type="term" value="C:actin cytoskeleton"/>
    <property type="evidence" value="ECO:0007669"/>
    <property type="project" value="TreeGrafter"/>
</dbReference>
<dbReference type="GO" id="GO:0005938">
    <property type="term" value="C:cell cortex"/>
    <property type="evidence" value="ECO:0007669"/>
    <property type="project" value="UniProtKB-SubCell"/>
</dbReference>
<dbReference type="GO" id="GO:0043197">
    <property type="term" value="C:dendritic spine"/>
    <property type="evidence" value="ECO:0000250"/>
    <property type="project" value="UniProtKB"/>
</dbReference>
<dbReference type="GO" id="GO:0090443">
    <property type="term" value="C:FAR/SIN/STRIPAK complex"/>
    <property type="evidence" value="ECO:0000250"/>
    <property type="project" value="UniProtKB"/>
</dbReference>
<dbReference type="GO" id="GO:0051721">
    <property type="term" value="F:protein phosphatase 2A binding"/>
    <property type="evidence" value="ECO:0007669"/>
    <property type="project" value="TreeGrafter"/>
</dbReference>
<dbReference type="Gene3D" id="1.25.40.20">
    <property type="entry name" value="Ankyrin repeat-containing domain"/>
    <property type="match status" value="1"/>
</dbReference>
<dbReference type="InterPro" id="IPR002110">
    <property type="entry name" value="Ankyrin_rpt"/>
</dbReference>
<dbReference type="InterPro" id="IPR036770">
    <property type="entry name" value="Ankyrin_rpt-contain_sf"/>
</dbReference>
<dbReference type="InterPro" id="IPR050719">
    <property type="entry name" value="Cortactin-Actin_Reg"/>
</dbReference>
<dbReference type="InterPro" id="IPR019131">
    <property type="entry name" value="Cortactin-binding_p2_N"/>
</dbReference>
<dbReference type="PANTHER" id="PTHR23166:SF9">
    <property type="entry name" value="CTTNBP2 N-TERMINAL-LIKE PROTEIN"/>
    <property type="match status" value="1"/>
</dbReference>
<dbReference type="PANTHER" id="PTHR23166">
    <property type="entry name" value="FILAMIN/GPBP-INTERACTING PROTEIN"/>
    <property type="match status" value="1"/>
</dbReference>
<dbReference type="Pfam" id="PF25408">
    <property type="entry name" value="AAA_lid_NAV1"/>
    <property type="match status" value="1"/>
</dbReference>
<dbReference type="Pfam" id="PF00023">
    <property type="entry name" value="Ank"/>
    <property type="match status" value="2"/>
</dbReference>
<dbReference type="Pfam" id="PF12796">
    <property type="entry name" value="Ank_2"/>
    <property type="match status" value="1"/>
</dbReference>
<dbReference type="Pfam" id="PF09727">
    <property type="entry name" value="CortBP2"/>
    <property type="match status" value="1"/>
</dbReference>
<dbReference type="SMART" id="SM00248">
    <property type="entry name" value="ANK"/>
    <property type="match status" value="6"/>
</dbReference>
<dbReference type="SUPFAM" id="SSF48403">
    <property type="entry name" value="Ankyrin repeat"/>
    <property type="match status" value="1"/>
</dbReference>
<dbReference type="PROSITE" id="PS50297">
    <property type="entry name" value="ANK_REP_REGION"/>
    <property type="match status" value="1"/>
</dbReference>
<dbReference type="PROSITE" id="PS50088">
    <property type="entry name" value="ANK_REPEAT"/>
    <property type="match status" value="4"/>
</dbReference>
<accession>Q09YM8</accession>
<reference key="1">
    <citation type="submission" date="2006-09" db="EMBL/GenBank/DDBJ databases">
        <title>NISC comparative sequencing initiative.</title>
        <authorList>
            <person name="Antonellis A."/>
            <person name="Ayele K."/>
            <person name="Benjamin B."/>
            <person name="Blakesley R.W."/>
            <person name="Boakye A."/>
            <person name="Bouffard G.G."/>
            <person name="Brinkley C."/>
            <person name="Brooks S."/>
            <person name="Chu G."/>
            <person name="Coleman H."/>
            <person name="Engle J."/>
            <person name="Gestole M."/>
            <person name="Greene A."/>
            <person name="Guan X."/>
            <person name="Gupta J."/>
            <person name="Haghighi P."/>
            <person name="Han J."/>
            <person name="Hansen N."/>
            <person name="Ho S.-L."/>
            <person name="Hu P."/>
            <person name="Hunter G."/>
            <person name="Hurle B."/>
            <person name="Idol J.R."/>
            <person name="Kwong P."/>
            <person name="Laric P."/>
            <person name="Larson S."/>
            <person name="Lee-Lin S.-Q."/>
            <person name="Legaspi R."/>
            <person name="Madden M."/>
            <person name="Maduro Q.L."/>
            <person name="Maduro V.B."/>
            <person name="Margulies E.H."/>
            <person name="Masiello C."/>
            <person name="Maskeri B."/>
            <person name="McDowell J."/>
            <person name="Mojidi H.A."/>
            <person name="Mullikin J.C."/>
            <person name="Oestreicher J.S."/>
            <person name="Park M."/>
            <person name="Portnoy M.E."/>
            <person name="Prasad A."/>
            <person name="Puri O."/>
            <person name="Reddix-Dugue N."/>
            <person name="Schandler K."/>
            <person name="Schueler M.G."/>
            <person name="Sison C."/>
            <person name="Stantripop S."/>
            <person name="Stephen E."/>
            <person name="Taye A."/>
            <person name="Thomas J.W."/>
            <person name="Thomas P.J."/>
            <person name="Tsipouri V."/>
            <person name="Ung L."/>
            <person name="Vogt J.L."/>
            <person name="Wetherby K.D."/>
            <person name="Young A."/>
            <person name="Green E.D."/>
        </authorList>
    </citation>
    <scope>NUCLEOTIDE SEQUENCE [LARGE SCALE GENOMIC DNA]</scope>
</reference>